<protein>
    <recommendedName>
        <fullName evidence="1">ATP phosphoribosyltransferase</fullName>
        <shortName evidence="1">ATP-PRT</shortName>
        <shortName evidence="1">ATP-PRTase</shortName>
        <ecNumber evidence="1">2.4.2.17</ecNumber>
    </recommendedName>
</protein>
<accession>A1RTU8</accession>
<organism>
    <name type="scientific">Pyrobaculum islandicum (strain DSM 4184 / JCM 9189 / GEO3)</name>
    <dbReference type="NCBI Taxonomy" id="384616"/>
    <lineage>
        <taxon>Archaea</taxon>
        <taxon>Thermoproteota</taxon>
        <taxon>Thermoprotei</taxon>
        <taxon>Thermoproteales</taxon>
        <taxon>Thermoproteaceae</taxon>
        <taxon>Pyrobaculum</taxon>
    </lineage>
</organism>
<name>HIS1_PYRIL</name>
<feature type="chain" id="PRO_1000004489" description="ATP phosphoribosyltransferase">
    <location>
        <begin position="1"/>
        <end position="282"/>
    </location>
</feature>
<dbReference type="EC" id="2.4.2.17" evidence="1"/>
<dbReference type="EMBL" id="CP000504">
    <property type="protein sequence ID" value="ABL88380.1"/>
    <property type="molecule type" value="Genomic_DNA"/>
</dbReference>
<dbReference type="RefSeq" id="WP_011762955.1">
    <property type="nucleotide sequence ID" value="NC_008701.1"/>
</dbReference>
<dbReference type="SMR" id="A1RTU8"/>
<dbReference type="STRING" id="384616.Pisl_1213"/>
<dbReference type="GeneID" id="4617016"/>
<dbReference type="KEGG" id="pis:Pisl_1213"/>
<dbReference type="eggNOG" id="arCOG02208">
    <property type="taxonomic scope" value="Archaea"/>
</dbReference>
<dbReference type="HOGENOM" id="CLU_038115_1_1_2"/>
<dbReference type="OrthoDB" id="33116at2157"/>
<dbReference type="UniPathway" id="UPA00031">
    <property type="reaction ID" value="UER00006"/>
</dbReference>
<dbReference type="Proteomes" id="UP000002595">
    <property type="component" value="Chromosome"/>
</dbReference>
<dbReference type="GO" id="GO:0005737">
    <property type="term" value="C:cytoplasm"/>
    <property type="evidence" value="ECO:0007669"/>
    <property type="project" value="UniProtKB-SubCell"/>
</dbReference>
<dbReference type="GO" id="GO:0005524">
    <property type="term" value="F:ATP binding"/>
    <property type="evidence" value="ECO:0007669"/>
    <property type="project" value="UniProtKB-KW"/>
</dbReference>
<dbReference type="GO" id="GO:0003879">
    <property type="term" value="F:ATP phosphoribosyltransferase activity"/>
    <property type="evidence" value="ECO:0007669"/>
    <property type="project" value="UniProtKB-UniRule"/>
</dbReference>
<dbReference type="GO" id="GO:0000287">
    <property type="term" value="F:magnesium ion binding"/>
    <property type="evidence" value="ECO:0007669"/>
    <property type="project" value="UniProtKB-UniRule"/>
</dbReference>
<dbReference type="GO" id="GO:0000105">
    <property type="term" value="P:L-histidine biosynthetic process"/>
    <property type="evidence" value="ECO:0007669"/>
    <property type="project" value="UniProtKB-UniRule"/>
</dbReference>
<dbReference type="CDD" id="cd13594">
    <property type="entry name" value="PBP2_HisGL4"/>
    <property type="match status" value="1"/>
</dbReference>
<dbReference type="FunFam" id="3.30.70.120:FF:000002">
    <property type="entry name" value="ATP phosphoribosyltransferase"/>
    <property type="match status" value="1"/>
</dbReference>
<dbReference type="Gene3D" id="3.30.70.120">
    <property type="match status" value="1"/>
</dbReference>
<dbReference type="Gene3D" id="3.40.190.10">
    <property type="entry name" value="Periplasmic binding protein-like II"/>
    <property type="match status" value="2"/>
</dbReference>
<dbReference type="HAMAP" id="MF_00079">
    <property type="entry name" value="HisG_Long"/>
    <property type="match status" value="1"/>
</dbReference>
<dbReference type="InterPro" id="IPR020621">
    <property type="entry name" value="ATP-PRT_HisG_long"/>
</dbReference>
<dbReference type="InterPro" id="IPR013820">
    <property type="entry name" value="ATP_PRibTrfase_cat"/>
</dbReference>
<dbReference type="InterPro" id="IPR018198">
    <property type="entry name" value="ATP_PRibTrfase_CS"/>
</dbReference>
<dbReference type="InterPro" id="IPR001348">
    <property type="entry name" value="ATP_PRibTrfase_HisG"/>
</dbReference>
<dbReference type="InterPro" id="IPR013115">
    <property type="entry name" value="HisG_C"/>
</dbReference>
<dbReference type="InterPro" id="IPR011322">
    <property type="entry name" value="N-reg_PII-like_a/b"/>
</dbReference>
<dbReference type="InterPro" id="IPR015867">
    <property type="entry name" value="N-reg_PII/ATP_PRibTrfase_C"/>
</dbReference>
<dbReference type="NCBIfam" id="TIGR00070">
    <property type="entry name" value="hisG"/>
    <property type="match status" value="1"/>
</dbReference>
<dbReference type="NCBIfam" id="TIGR03455">
    <property type="entry name" value="HisG_C-term"/>
    <property type="match status" value="1"/>
</dbReference>
<dbReference type="PANTHER" id="PTHR21403:SF10">
    <property type="entry name" value="ATP PHOSPHORIBOSYLTRANSFERASE"/>
    <property type="match status" value="1"/>
</dbReference>
<dbReference type="PANTHER" id="PTHR21403">
    <property type="entry name" value="ATP PHOSPHORIBOSYLTRANSFERASE ATP-PRTASE"/>
    <property type="match status" value="1"/>
</dbReference>
<dbReference type="Pfam" id="PF01634">
    <property type="entry name" value="HisG"/>
    <property type="match status" value="1"/>
</dbReference>
<dbReference type="Pfam" id="PF08029">
    <property type="entry name" value="HisG_C"/>
    <property type="match status" value="1"/>
</dbReference>
<dbReference type="SUPFAM" id="SSF54913">
    <property type="entry name" value="GlnB-like"/>
    <property type="match status" value="1"/>
</dbReference>
<dbReference type="SUPFAM" id="SSF53850">
    <property type="entry name" value="Periplasmic binding protein-like II"/>
    <property type="match status" value="1"/>
</dbReference>
<dbReference type="PROSITE" id="PS01316">
    <property type="entry name" value="ATP_P_PHORIBOSYLTR"/>
    <property type="match status" value="1"/>
</dbReference>
<keyword id="KW-0028">Amino-acid biosynthesis</keyword>
<keyword id="KW-0067">ATP-binding</keyword>
<keyword id="KW-0963">Cytoplasm</keyword>
<keyword id="KW-0328">Glycosyltransferase</keyword>
<keyword id="KW-0368">Histidine biosynthesis</keyword>
<keyword id="KW-0460">Magnesium</keyword>
<keyword id="KW-0479">Metal-binding</keyword>
<keyword id="KW-0547">Nucleotide-binding</keyword>
<keyword id="KW-0808">Transferase</keyword>
<proteinExistence type="inferred from homology"/>
<sequence>MLLAIPSKGRLQEPTLRLLEAVGIKPLASDERALVLPTSWNDVNIIKARPEDIPYLVDSGRIWAGITGHDYIIESGSNVVEVLDLEFGKGKLVVAVPKTSGIKSIDELPPGARVATKFVNIAYNYFAELGKRVRIVRVAGSVEILPQLGIADAILDVMATGTTLEIHGLTPIATVLETSARLIVHPNYVNHELTKKLVTFIKGYYAAQGRKMIFLNVPATKLEDVLSILPAMEAPSVTKLAKGDVYEVFSVVPEDILPDLVMKLKNAGAKDIVVTSIEKLIS</sequence>
<evidence type="ECO:0000255" key="1">
    <source>
        <dbReference type="HAMAP-Rule" id="MF_00079"/>
    </source>
</evidence>
<comment type="function">
    <text evidence="1">Catalyzes the condensation of ATP and 5-phosphoribose 1-diphosphate to form N'-(5'-phosphoribosyl)-ATP (PR-ATP). Has a crucial role in the pathway because the rate of histidine biosynthesis seems to be controlled primarily by regulation of HisG enzymatic activity.</text>
</comment>
<comment type="catalytic activity">
    <reaction evidence="1">
        <text>1-(5-phospho-beta-D-ribosyl)-ATP + diphosphate = 5-phospho-alpha-D-ribose 1-diphosphate + ATP</text>
        <dbReference type="Rhea" id="RHEA:18473"/>
        <dbReference type="ChEBI" id="CHEBI:30616"/>
        <dbReference type="ChEBI" id="CHEBI:33019"/>
        <dbReference type="ChEBI" id="CHEBI:58017"/>
        <dbReference type="ChEBI" id="CHEBI:73183"/>
        <dbReference type="EC" id="2.4.2.17"/>
    </reaction>
</comment>
<comment type="cofactor">
    <cofactor evidence="1">
        <name>Mg(2+)</name>
        <dbReference type="ChEBI" id="CHEBI:18420"/>
    </cofactor>
</comment>
<comment type="activity regulation">
    <text evidence="1">Feedback inhibited by histidine.</text>
</comment>
<comment type="pathway">
    <text evidence="1">Amino-acid biosynthesis; L-histidine biosynthesis; L-histidine from 5-phospho-alpha-D-ribose 1-diphosphate: step 1/9.</text>
</comment>
<comment type="subcellular location">
    <subcellularLocation>
        <location evidence="1">Cytoplasm</location>
    </subcellularLocation>
</comment>
<comment type="similarity">
    <text evidence="1">Belongs to the ATP phosphoribosyltransferase family. Long subfamily.</text>
</comment>
<reference key="1">
    <citation type="submission" date="2006-12" db="EMBL/GenBank/DDBJ databases">
        <title>Complete sequence of Pyrobaculum islandicum DSM 4184.</title>
        <authorList>
            <person name="Copeland A."/>
            <person name="Lucas S."/>
            <person name="Lapidus A."/>
            <person name="Barry K."/>
            <person name="Detter J.C."/>
            <person name="Glavina del Rio T."/>
            <person name="Dalin E."/>
            <person name="Tice H."/>
            <person name="Pitluck S."/>
            <person name="Meincke L."/>
            <person name="Brettin T."/>
            <person name="Bruce D."/>
            <person name="Han C."/>
            <person name="Tapia R."/>
            <person name="Gilna P."/>
            <person name="Schmutz J."/>
            <person name="Larimer F."/>
            <person name="Land M."/>
            <person name="Hauser L."/>
            <person name="Kyrpides N."/>
            <person name="Mikhailova N."/>
            <person name="Cozen A.E."/>
            <person name="Fitz-Gibbon S.T."/>
            <person name="House C.H."/>
            <person name="Saltikov C."/>
            <person name="Lowe T."/>
            <person name="Richardson P."/>
        </authorList>
    </citation>
    <scope>NUCLEOTIDE SEQUENCE [LARGE SCALE GENOMIC DNA]</scope>
    <source>
        <strain>DSM 4184 / JCM 9189 / GEO3</strain>
    </source>
</reference>
<gene>
    <name evidence="1" type="primary">hisG</name>
    <name type="ordered locus">Pisl_1213</name>
</gene>